<evidence type="ECO:0000255" key="1">
    <source>
        <dbReference type="PROSITE-ProRule" id="PRU00388"/>
    </source>
</evidence>
<evidence type="ECO:0000255" key="2">
    <source>
        <dbReference type="PROSITE-ProRule" id="PRU10133"/>
    </source>
</evidence>
<feature type="chain" id="PRO_0000082524" description="Ubiquitin-conjugating enzyme E2-18 kDa">
    <location>
        <begin position="1"/>
        <end position="153"/>
    </location>
</feature>
<feature type="domain" description="UBC core" evidence="1">
    <location>
        <begin position="2"/>
        <end position="149"/>
    </location>
</feature>
<feature type="active site" description="Glycyl thioester intermediate" evidence="1 2">
    <location>
        <position position="86"/>
    </location>
</feature>
<reference key="1">
    <citation type="journal article" date="1996" name="J. Mol. Evol.">
        <title>Duplication and divergence of the genes of the alpha-esterase cluster of Drosophila melanogaster.</title>
        <authorList>
            <person name="Robin C."/>
            <person name="Russell R.J."/>
            <person name="Medveczky K.M."/>
            <person name="Oakeshott J.G."/>
        </authorList>
    </citation>
    <scope>NUCLEOTIDE SEQUENCE [GENOMIC DNA]</scope>
</reference>
<reference key="2">
    <citation type="journal article" date="2000" name="Science">
        <title>The genome sequence of Drosophila melanogaster.</title>
        <authorList>
            <person name="Adams M.D."/>
            <person name="Celniker S.E."/>
            <person name="Holt R.A."/>
            <person name="Evans C.A."/>
            <person name="Gocayne J.D."/>
            <person name="Amanatides P.G."/>
            <person name="Scherer S.E."/>
            <person name="Li P.W."/>
            <person name="Hoskins R.A."/>
            <person name="Galle R.F."/>
            <person name="George R.A."/>
            <person name="Lewis S.E."/>
            <person name="Richards S."/>
            <person name="Ashburner M."/>
            <person name="Henderson S.N."/>
            <person name="Sutton G.G."/>
            <person name="Wortman J.R."/>
            <person name="Yandell M.D."/>
            <person name="Zhang Q."/>
            <person name="Chen L.X."/>
            <person name="Brandon R.C."/>
            <person name="Rogers Y.-H.C."/>
            <person name="Blazej R.G."/>
            <person name="Champe M."/>
            <person name="Pfeiffer B.D."/>
            <person name="Wan K.H."/>
            <person name="Doyle C."/>
            <person name="Baxter E.G."/>
            <person name="Helt G."/>
            <person name="Nelson C.R."/>
            <person name="Miklos G.L.G."/>
            <person name="Abril J.F."/>
            <person name="Agbayani A."/>
            <person name="An H.-J."/>
            <person name="Andrews-Pfannkoch C."/>
            <person name="Baldwin D."/>
            <person name="Ballew R.M."/>
            <person name="Basu A."/>
            <person name="Baxendale J."/>
            <person name="Bayraktaroglu L."/>
            <person name="Beasley E.M."/>
            <person name="Beeson K.Y."/>
            <person name="Benos P.V."/>
            <person name="Berman B.P."/>
            <person name="Bhandari D."/>
            <person name="Bolshakov S."/>
            <person name="Borkova D."/>
            <person name="Botchan M.R."/>
            <person name="Bouck J."/>
            <person name="Brokstein P."/>
            <person name="Brottier P."/>
            <person name="Burtis K.C."/>
            <person name="Busam D.A."/>
            <person name="Butler H."/>
            <person name="Cadieu E."/>
            <person name="Center A."/>
            <person name="Chandra I."/>
            <person name="Cherry J.M."/>
            <person name="Cawley S."/>
            <person name="Dahlke C."/>
            <person name="Davenport L.B."/>
            <person name="Davies P."/>
            <person name="de Pablos B."/>
            <person name="Delcher A."/>
            <person name="Deng Z."/>
            <person name="Mays A.D."/>
            <person name="Dew I."/>
            <person name="Dietz S.M."/>
            <person name="Dodson K."/>
            <person name="Doup L.E."/>
            <person name="Downes M."/>
            <person name="Dugan-Rocha S."/>
            <person name="Dunkov B.C."/>
            <person name="Dunn P."/>
            <person name="Durbin K.J."/>
            <person name="Evangelista C.C."/>
            <person name="Ferraz C."/>
            <person name="Ferriera S."/>
            <person name="Fleischmann W."/>
            <person name="Fosler C."/>
            <person name="Gabrielian A.E."/>
            <person name="Garg N.S."/>
            <person name="Gelbart W.M."/>
            <person name="Glasser K."/>
            <person name="Glodek A."/>
            <person name="Gong F."/>
            <person name="Gorrell J.H."/>
            <person name="Gu Z."/>
            <person name="Guan P."/>
            <person name="Harris M."/>
            <person name="Harris N.L."/>
            <person name="Harvey D.A."/>
            <person name="Heiman T.J."/>
            <person name="Hernandez J.R."/>
            <person name="Houck J."/>
            <person name="Hostin D."/>
            <person name="Houston K.A."/>
            <person name="Howland T.J."/>
            <person name="Wei M.-H."/>
            <person name="Ibegwam C."/>
            <person name="Jalali M."/>
            <person name="Kalush F."/>
            <person name="Karpen G.H."/>
            <person name="Ke Z."/>
            <person name="Kennison J.A."/>
            <person name="Ketchum K.A."/>
            <person name="Kimmel B.E."/>
            <person name="Kodira C.D."/>
            <person name="Kraft C.L."/>
            <person name="Kravitz S."/>
            <person name="Kulp D."/>
            <person name="Lai Z."/>
            <person name="Lasko P."/>
            <person name="Lei Y."/>
            <person name="Levitsky A.A."/>
            <person name="Li J.H."/>
            <person name="Li Z."/>
            <person name="Liang Y."/>
            <person name="Lin X."/>
            <person name="Liu X."/>
            <person name="Mattei B."/>
            <person name="McIntosh T.C."/>
            <person name="McLeod M.P."/>
            <person name="McPherson D."/>
            <person name="Merkulov G."/>
            <person name="Milshina N.V."/>
            <person name="Mobarry C."/>
            <person name="Morris J."/>
            <person name="Moshrefi A."/>
            <person name="Mount S.M."/>
            <person name="Moy M."/>
            <person name="Murphy B."/>
            <person name="Murphy L."/>
            <person name="Muzny D.M."/>
            <person name="Nelson D.L."/>
            <person name="Nelson D.R."/>
            <person name="Nelson K.A."/>
            <person name="Nixon K."/>
            <person name="Nusskern D.R."/>
            <person name="Pacleb J.M."/>
            <person name="Palazzolo M."/>
            <person name="Pittman G.S."/>
            <person name="Pan S."/>
            <person name="Pollard J."/>
            <person name="Puri V."/>
            <person name="Reese M.G."/>
            <person name="Reinert K."/>
            <person name="Remington K."/>
            <person name="Saunders R.D.C."/>
            <person name="Scheeler F."/>
            <person name="Shen H."/>
            <person name="Shue B.C."/>
            <person name="Siden-Kiamos I."/>
            <person name="Simpson M."/>
            <person name="Skupski M.P."/>
            <person name="Smith T.J."/>
            <person name="Spier E."/>
            <person name="Spradling A.C."/>
            <person name="Stapleton M."/>
            <person name="Strong R."/>
            <person name="Sun E."/>
            <person name="Svirskas R."/>
            <person name="Tector C."/>
            <person name="Turner R."/>
            <person name="Venter E."/>
            <person name="Wang A.H."/>
            <person name="Wang X."/>
            <person name="Wang Z.-Y."/>
            <person name="Wassarman D.A."/>
            <person name="Weinstock G.M."/>
            <person name="Weissenbach J."/>
            <person name="Williams S.M."/>
            <person name="Woodage T."/>
            <person name="Worley K.C."/>
            <person name="Wu D."/>
            <person name="Yang S."/>
            <person name="Yao Q.A."/>
            <person name="Ye J."/>
            <person name="Yeh R.-F."/>
            <person name="Zaveri J.S."/>
            <person name="Zhan M."/>
            <person name="Zhang G."/>
            <person name="Zhao Q."/>
            <person name="Zheng L."/>
            <person name="Zheng X.H."/>
            <person name="Zhong F.N."/>
            <person name="Zhong W."/>
            <person name="Zhou X."/>
            <person name="Zhu S.C."/>
            <person name="Zhu X."/>
            <person name="Smith H.O."/>
            <person name="Gibbs R.A."/>
            <person name="Myers E.W."/>
            <person name="Rubin G.M."/>
            <person name="Venter J.C."/>
        </authorList>
    </citation>
    <scope>NUCLEOTIDE SEQUENCE [LARGE SCALE GENOMIC DNA]</scope>
    <source>
        <strain>Berkeley</strain>
    </source>
</reference>
<reference key="3">
    <citation type="journal article" date="2002" name="Genome Biol.">
        <title>Annotation of the Drosophila melanogaster euchromatic genome: a systematic review.</title>
        <authorList>
            <person name="Misra S."/>
            <person name="Crosby M.A."/>
            <person name="Mungall C.J."/>
            <person name="Matthews B.B."/>
            <person name="Campbell K.S."/>
            <person name="Hradecky P."/>
            <person name="Huang Y."/>
            <person name="Kaminker J.S."/>
            <person name="Millburn G.H."/>
            <person name="Prochnik S.E."/>
            <person name="Smith C.D."/>
            <person name="Tupy J.L."/>
            <person name="Whitfield E.J."/>
            <person name="Bayraktaroglu L."/>
            <person name="Berman B.P."/>
            <person name="Bettencourt B.R."/>
            <person name="Celniker S.E."/>
            <person name="de Grey A.D.N.J."/>
            <person name="Drysdale R.A."/>
            <person name="Harris N.L."/>
            <person name="Richter J."/>
            <person name="Russo S."/>
            <person name="Schroeder A.J."/>
            <person name="Shu S.Q."/>
            <person name="Stapleton M."/>
            <person name="Yamada C."/>
            <person name="Ashburner M."/>
            <person name="Gelbart W.M."/>
            <person name="Rubin G.M."/>
            <person name="Lewis S.E."/>
        </authorList>
    </citation>
    <scope>GENOME REANNOTATION</scope>
    <source>
        <strain>Berkeley</strain>
    </source>
</reference>
<reference key="4">
    <citation type="submission" date="2009-06" db="EMBL/GenBank/DDBJ databases">
        <authorList>
            <person name="Carlson J.W."/>
            <person name="Booth B."/>
            <person name="Frise E."/>
            <person name="Park S."/>
            <person name="Wan K.H."/>
            <person name="Yu C."/>
            <person name="Celniker S.E."/>
        </authorList>
    </citation>
    <scope>NUCLEOTIDE SEQUENCE [LARGE SCALE MRNA]</scope>
    <source>
        <strain>Berkeley</strain>
    </source>
</reference>
<dbReference type="EC" id="2.3.2.23"/>
<dbReference type="EMBL" id="U51051">
    <property type="protein sequence ID" value="AAB01150.1"/>
    <property type="molecule type" value="Genomic_DNA"/>
</dbReference>
<dbReference type="EMBL" id="AE014297">
    <property type="protein sequence ID" value="AAF54011.1"/>
    <property type="molecule type" value="Genomic_DNA"/>
</dbReference>
<dbReference type="EMBL" id="BT088773">
    <property type="protein sequence ID" value="ACR82498.1"/>
    <property type="molecule type" value="mRNA"/>
</dbReference>
<dbReference type="RefSeq" id="NP_524260.1">
    <property type="nucleotide sequence ID" value="NM_079536.3"/>
</dbReference>
<dbReference type="SMR" id="P52487"/>
<dbReference type="BioGRID" id="66090">
    <property type="interactions" value="12"/>
</dbReference>
<dbReference type="DIP" id="DIP-17217N"/>
<dbReference type="FunCoup" id="P52487">
    <property type="interactions" value="109"/>
</dbReference>
<dbReference type="IntAct" id="P52487">
    <property type="interactions" value="8"/>
</dbReference>
<dbReference type="STRING" id="7227.FBpp0081076"/>
<dbReference type="PaxDb" id="7227-FBpp0081076"/>
<dbReference type="DNASU" id="40900"/>
<dbReference type="EnsemblMetazoa" id="FBtr0081552">
    <property type="protein sequence ID" value="FBpp0081076"/>
    <property type="gene ID" value="FBgn0017456"/>
</dbReference>
<dbReference type="GeneID" id="40900"/>
<dbReference type="KEGG" id="dme:Dmel_CG12799"/>
<dbReference type="AGR" id="FB:FBgn0017456"/>
<dbReference type="CTD" id="40900"/>
<dbReference type="FlyBase" id="FBgn0017456">
    <property type="gene designation" value="Ubc84D"/>
</dbReference>
<dbReference type="VEuPathDB" id="VectorBase:FBgn0017456"/>
<dbReference type="eggNOG" id="KOG0422">
    <property type="taxonomic scope" value="Eukaryota"/>
</dbReference>
<dbReference type="GeneTree" id="ENSGT00940000165322"/>
<dbReference type="HOGENOM" id="CLU_030988_13_3_1"/>
<dbReference type="InParanoid" id="P52487"/>
<dbReference type="OMA" id="DESIMVW"/>
<dbReference type="OrthoDB" id="9973183at2759"/>
<dbReference type="PhylomeDB" id="P52487"/>
<dbReference type="Reactome" id="R-DME-1169408">
    <property type="pathway name" value="ISG15 antiviral mechanism"/>
</dbReference>
<dbReference type="Reactome" id="R-DME-983168">
    <property type="pathway name" value="Antigen processing: Ubiquitination &amp; Proteasome degradation"/>
</dbReference>
<dbReference type="Reactome" id="R-DME-9833482">
    <property type="pathway name" value="PKR-mediated signaling"/>
</dbReference>
<dbReference type="UniPathway" id="UPA00143"/>
<dbReference type="BioGRID-ORCS" id="40900">
    <property type="hits" value="0 hits in 1 CRISPR screen"/>
</dbReference>
<dbReference type="GenomeRNAi" id="40900"/>
<dbReference type="PRO" id="PR:P52487"/>
<dbReference type="Proteomes" id="UP000000803">
    <property type="component" value="Chromosome 3R"/>
</dbReference>
<dbReference type="Bgee" id="FBgn0017456">
    <property type="expression patterns" value="Expressed in early-mid elongation-stage spermatid (Drosophila) in testis and 28 other cell types or tissues"/>
</dbReference>
<dbReference type="ExpressionAtlas" id="P52487">
    <property type="expression patterns" value="baseline and differential"/>
</dbReference>
<dbReference type="GO" id="GO:0005634">
    <property type="term" value="C:nucleus"/>
    <property type="evidence" value="ECO:0000318"/>
    <property type="project" value="GO_Central"/>
</dbReference>
<dbReference type="GO" id="GO:0005524">
    <property type="term" value="F:ATP binding"/>
    <property type="evidence" value="ECO:0007669"/>
    <property type="project" value="UniProtKB-KW"/>
</dbReference>
<dbReference type="GO" id="GO:0061631">
    <property type="term" value="F:ubiquitin conjugating enzyme activity"/>
    <property type="evidence" value="ECO:0000318"/>
    <property type="project" value="GO_Central"/>
</dbReference>
<dbReference type="GO" id="GO:0004842">
    <property type="term" value="F:ubiquitin-protein transferase activity"/>
    <property type="evidence" value="ECO:0000250"/>
    <property type="project" value="FlyBase"/>
</dbReference>
<dbReference type="GO" id="GO:0000209">
    <property type="term" value="P:protein polyubiquitination"/>
    <property type="evidence" value="ECO:0000250"/>
    <property type="project" value="FlyBase"/>
</dbReference>
<dbReference type="GO" id="GO:0006511">
    <property type="term" value="P:ubiquitin-dependent protein catabolic process"/>
    <property type="evidence" value="ECO:0000318"/>
    <property type="project" value="GO_Central"/>
</dbReference>
<dbReference type="CDD" id="cd23801">
    <property type="entry name" value="UBCc_UBE2L3"/>
    <property type="match status" value="1"/>
</dbReference>
<dbReference type="FunFam" id="3.10.110.10:FF:000011">
    <property type="entry name" value="Ubiquitin-conjugating enzyme E2 L3"/>
    <property type="match status" value="1"/>
</dbReference>
<dbReference type="Gene3D" id="3.10.110.10">
    <property type="entry name" value="Ubiquitin Conjugating Enzyme"/>
    <property type="match status" value="1"/>
</dbReference>
<dbReference type="InterPro" id="IPR050113">
    <property type="entry name" value="Ub_conjugating_enzyme"/>
</dbReference>
<dbReference type="InterPro" id="IPR000608">
    <property type="entry name" value="UBQ-conjugat_E2_core"/>
</dbReference>
<dbReference type="InterPro" id="IPR023313">
    <property type="entry name" value="UBQ-conjugating_AS"/>
</dbReference>
<dbReference type="InterPro" id="IPR016135">
    <property type="entry name" value="UBQ-conjugating_enzyme/RWD"/>
</dbReference>
<dbReference type="PANTHER" id="PTHR24067">
    <property type="entry name" value="UBIQUITIN-CONJUGATING ENZYME E2"/>
    <property type="match status" value="1"/>
</dbReference>
<dbReference type="Pfam" id="PF00179">
    <property type="entry name" value="UQ_con"/>
    <property type="match status" value="1"/>
</dbReference>
<dbReference type="SMART" id="SM00212">
    <property type="entry name" value="UBCc"/>
    <property type="match status" value="1"/>
</dbReference>
<dbReference type="SUPFAM" id="SSF54495">
    <property type="entry name" value="UBC-like"/>
    <property type="match status" value="1"/>
</dbReference>
<dbReference type="PROSITE" id="PS00183">
    <property type="entry name" value="UBC_1"/>
    <property type="match status" value="1"/>
</dbReference>
<dbReference type="PROSITE" id="PS50127">
    <property type="entry name" value="UBC_2"/>
    <property type="match status" value="1"/>
</dbReference>
<sequence>MAATRRLTRELSDLVEAKMSTLRNIESSDESLLMWTGLLVPEKAPYNKGAFRIEINFPPQYPFMPPKILFKTKIYHPNVDEKGEVCLPIISTDNWKPTTRTEQVLQALVAIVHNPEPEHPLRSDLAEEFVREHKKFMKTAEEFTKKNAEKRPE</sequence>
<comment type="function">
    <text evidence="1">Catalyzes the covalent attachment of ubiquitin to other proteins.</text>
</comment>
<comment type="catalytic activity">
    <reaction evidence="1 2">
        <text>S-ubiquitinyl-[E1 ubiquitin-activating enzyme]-L-cysteine + [E2 ubiquitin-conjugating enzyme]-L-cysteine = [E1 ubiquitin-activating enzyme]-L-cysteine + S-ubiquitinyl-[E2 ubiquitin-conjugating enzyme]-L-cysteine.</text>
        <dbReference type="EC" id="2.3.2.23"/>
    </reaction>
</comment>
<comment type="pathway">
    <text evidence="1">Protein modification; protein ubiquitination.</text>
</comment>
<comment type="similarity">
    <text evidence="1">Belongs to the ubiquitin-conjugating enzyme family.</text>
</comment>
<accession>P52487</accession>
<accession>C4XVG9</accession>
<accession>Q9VIB4</accession>
<gene>
    <name type="primary">Ubc84D</name>
    <name type="ORF">CG12799</name>
</gene>
<name>UBC84_DROME</name>
<proteinExistence type="evidence at transcript level"/>
<keyword id="KW-0067">ATP-binding</keyword>
<keyword id="KW-0547">Nucleotide-binding</keyword>
<keyword id="KW-1185">Reference proteome</keyword>
<keyword id="KW-0808">Transferase</keyword>
<keyword id="KW-0833">Ubl conjugation pathway</keyword>
<protein>
    <recommendedName>
        <fullName>Ubiquitin-conjugating enzyme E2-18 kDa</fullName>
        <ecNumber>2.3.2.23</ecNumber>
    </recommendedName>
    <alternativeName>
        <fullName>E2 ubiquitin-conjugating enzyme 84D</fullName>
    </alternativeName>
    <alternativeName>
        <fullName>Ubiquitin carrier protein</fullName>
    </alternativeName>
    <alternativeName>
        <fullName>Ubiquitin-protein ligase</fullName>
    </alternativeName>
</protein>
<organism>
    <name type="scientific">Drosophila melanogaster</name>
    <name type="common">Fruit fly</name>
    <dbReference type="NCBI Taxonomy" id="7227"/>
    <lineage>
        <taxon>Eukaryota</taxon>
        <taxon>Metazoa</taxon>
        <taxon>Ecdysozoa</taxon>
        <taxon>Arthropoda</taxon>
        <taxon>Hexapoda</taxon>
        <taxon>Insecta</taxon>
        <taxon>Pterygota</taxon>
        <taxon>Neoptera</taxon>
        <taxon>Endopterygota</taxon>
        <taxon>Diptera</taxon>
        <taxon>Brachycera</taxon>
        <taxon>Muscomorpha</taxon>
        <taxon>Ephydroidea</taxon>
        <taxon>Drosophilidae</taxon>
        <taxon>Drosophila</taxon>
        <taxon>Sophophora</taxon>
    </lineage>
</organism>